<organism>
    <name type="scientific">Bacillus subtilis (strain 168)</name>
    <dbReference type="NCBI Taxonomy" id="224308"/>
    <lineage>
        <taxon>Bacteria</taxon>
        <taxon>Bacillati</taxon>
        <taxon>Bacillota</taxon>
        <taxon>Bacilli</taxon>
        <taxon>Bacillales</taxon>
        <taxon>Bacillaceae</taxon>
        <taxon>Bacillus</taxon>
    </lineage>
</organism>
<dbReference type="EC" id="1.5.1.5" evidence="1"/>
<dbReference type="EC" id="3.5.4.9" evidence="1"/>
<dbReference type="EMBL" id="D84432">
    <property type="protein sequence ID" value="BAA12572.1"/>
    <property type="molecule type" value="Genomic_DNA"/>
</dbReference>
<dbReference type="EMBL" id="AL009126">
    <property type="protein sequence ID" value="CAB14362.1"/>
    <property type="molecule type" value="Genomic_DNA"/>
</dbReference>
<dbReference type="PIR" id="E69626">
    <property type="entry name" value="E69626"/>
</dbReference>
<dbReference type="RefSeq" id="NP_390311.1">
    <property type="nucleotide sequence ID" value="NC_000964.3"/>
</dbReference>
<dbReference type="RefSeq" id="WP_003230259.1">
    <property type="nucleotide sequence ID" value="NZ_OZ025638.1"/>
</dbReference>
<dbReference type="SMR" id="P54382"/>
<dbReference type="FunCoup" id="P54382">
    <property type="interactions" value="597"/>
</dbReference>
<dbReference type="IntAct" id="P54382">
    <property type="interactions" value="1"/>
</dbReference>
<dbReference type="MINT" id="P54382"/>
<dbReference type="STRING" id="224308.BSU24310"/>
<dbReference type="PaxDb" id="224308-BSU24310"/>
<dbReference type="EnsemblBacteria" id="CAB14362">
    <property type="protein sequence ID" value="CAB14362"/>
    <property type="gene ID" value="BSU_24310"/>
</dbReference>
<dbReference type="GeneID" id="938602"/>
<dbReference type="KEGG" id="bsu:BSU24310"/>
<dbReference type="PATRIC" id="fig|224308.179.peg.2649"/>
<dbReference type="eggNOG" id="COG0190">
    <property type="taxonomic scope" value="Bacteria"/>
</dbReference>
<dbReference type="InParanoid" id="P54382"/>
<dbReference type="OrthoDB" id="9803580at2"/>
<dbReference type="PhylomeDB" id="P54382"/>
<dbReference type="BioCyc" id="BSUB:BSU24310-MONOMER"/>
<dbReference type="UniPathway" id="UPA00193"/>
<dbReference type="Proteomes" id="UP000001570">
    <property type="component" value="Chromosome"/>
</dbReference>
<dbReference type="GO" id="GO:0005829">
    <property type="term" value="C:cytosol"/>
    <property type="evidence" value="ECO:0000318"/>
    <property type="project" value="GO_Central"/>
</dbReference>
<dbReference type="GO" id="GO:0004477">
    <property type="term" value="F:methenyltetrahydrofolate cyclohydrolase activity"/>
    <property type="evidence" value="ECO:0000318"/>
    <property type="project" value="GO_Central"/>
</dbReference>
<dbReference type="GO" id="GO:0004488">
    <property type="term" value="F:methylenetetrahydrofolate dehydrogenase (NADP+) activity"/>
    <property type="evidence" value="ECO:0000318"/>
    <property type="project" value="GO_Central"/>
</dbReference>
<dbReference type="GO" id="GO:0000105">
    <property type="term" value="P:L-histidine biosynthetic process"/>
    <property type="evidence" value="ECO:0007669"/>
    <property type="project" value="UniProtKB-KW"/>
</dbReference>
<dbReference type="GO" id="GO:0009086">
    <property type="term" value="P:methionine biosynthetic process"/>
    <property type="evidence" value="ECO:0007669"/>
    <property type="project" value="UniProtKB-KW"/>
</dbReference>
<dbReference type="GO" id="GO:0006164">
    <property type="term" value="P:purine nucleotide biosynthetic process"/>
    <property type="evidence" value="ECO:0007669"/>
    <property type="project" value="UniProtKB-KW"/>
</dbReference>
<dbReference type="GO" id="GO:0035999">
    <property type="term" value="P:tetrahydrofolate interconversion"/>
    <property type="evidence" value="ECO:0000318"/>
    <property type="project" value="GO_Central"/>
</dbReference>
<dbReference type="CDD" id="cd01080">
    <property type="entry name" value="NAD_bind_m-THF_DH_Cyclohyd"/>
    <property type="match status" value="1"/>
</dbReference>
<dbReference type="FunFam" id="3.40.50.10860:FF:000001">
    <property type="entry name" value="Bifunctional protein FolD"/>
    <property type="match status" value="1"/>
</dbReference>
<dbReference type="FunFam" id="3.40.50.720:FF:000094">
    <property type="entry name" value="Bifunctional protein FolD"/>
    <property type="match status" value="1"/>
</dbReference>
<dbReference type="Gene3D" id="3.40.50.10860">
    <property type="entry name" value="Leucine Dehydrogenase, chain A, domain 1"/>
    <property type="match status" value="1"/>
</dbReference>
<dbReference type="Gene3D" id="3.40.50.720">
    <property type="entry name" value="NAD(P)-binding Rossmann-like Domain"/>
    <property type="match status" value="1"/>
</dbReference>
<dbReference type="HAMAP" id="MF_01576">
    <property type="entry name" value="THF_DHG_CYH"/>
    <property type="match status" value="1"/>
</dbReference>
<dbReference type="InterPro" id="IPR046346">
    <property type="entry name" value="Aminoacid_DH-like_N_sf"/>
</dbReference>
<dbReference type="InterPro" id="IPR036291">
    <property type="entry name" value="NAD(P)-bd_dom_sf"/>
</dbReference>
<dbReference type="InterPro" id="IPR000672">
    <property type="entry name" value="THF_DH/CycHdrlase"/>
</dbReference>
<dbReference type="InterPro" id="IPR020630">
    <property type="entry name" value="THF_DH/CycHdrlase_cat_dom"/>
</dbReference>
<dbReference type="InterPro" id="IPR020867">
    <property type="entry name" value="THF_DH/CycHdrlase_CS"/>
</dbReference>
<dbReference type="InterPro" id="IPR020631">
    <property type="entry name" value="THF_DH/CycHdrlase_NAD-bd_dom"/>
</dbReference>
<dbReference type="NCBIfam" id="NF008058">
    <property type="entry name" value="PRK10792.1"/>
    <property type="match status" value="1"/>
</dbReference>
<dbReference type="NCBIfam" id="NF010783">
    <property type="entry name" value="PRK14186.1"/>
    <property type="match status" value="1"/>
</dbReference>
<dbReference type="PANTHER" id="PTHR48099:SF5">
    <property type="entry name" value="C-1-TETRAHYDROFOLATE SYNTHASE, CYTOPLASMIC"/>
    <property type="match status" value="1"/>
</dbReference>
<dbReference type="PANTHER" id="PTHR48099">
    <property type="entry name" value="C-1-TETRAHYDROFOLATE SYNTHASE, CYTOPLASMIC-RELATED"/>
    <property type="match status" value="1"/>
</dbReference>
<dbReference type="Pfam" id="PF00763">
    <property type="entry name" value="THF_DHG_CYH"/>
    <property type="match status" value="1"/>
</dbReference>
<dbReference type="Pfam" id="PF02882">
    <property type="entry name" value="THF_DHG_CYH_C"/>
    <property type="match status" value="1"/>
</dbReference>
<dbReference type="PRINTS" id="PR00085">
    <property type="entry name" value="THFDHDRGNASE"/>
</dbReference>
<dbReference type="SUPFAM" id="SSF53223">
    <property type="entry name" value="Aminoacid dehydrogenase-like, N-terminal domain"/>
    <property type="match status" value="1"/>
</dbReference>
<dbReference type="SUPFAM" id="SSF51735">
    <property type="entry name" value="NAD(P)-binding Rossmann-fold domains"/>
    <property type="match status" value="1"/>
</dbReference>
<dbReference type="PROSITE" id="PS00766">
    <property type="entry name" value="THF_DHG_CYH_1"/>
    <property type="match status" value="1"/>
</dbReference>
<dbReference type="PROSITE" id="PS00767">
    <property type="entry name" value="THF_DHG_CYH_2"/>
    <property type="match status" value="1"/>
</dbReference>
<comment type="function">
    <text evidence="1">Catalyzes the oxidation of 5,10-methylenetetrahydrofolate to 5,10-methenyltetrahydrofolate and then the hydrolysis of 5,10-methenyltetrahydrofolate to 10-formyltetrahydrofolate.</text>
</comment>
<comment type="catalytic activity">
    <reaction evidence="1">
        <text>(6R)-5,10-methylene-5,6,7,8-tetrahydrofolate + NADP(+) = (6R)-5,10-methenyltetrahydrofolate + NADPH</text>
        <dbReference type="Rhea" id="RHEA:22812"/>
        <dbReference type="ChEBI" id="CHEBI:15636"/>
        <dbReference type="ChEBI" id="CHEBI:57455"/>
        <dbReference type="ChEBI" id="CHEBI:57783"/>
        <dbReference type="ChEBI" id="CHEBI:58349"/>
        <dbReference type="EC" id="1.5.1.5"/>
    </reaction>
</comment>
<comment type="catalytic activity">
    <reaction evidence="1">
        <text>(6R)-5,10-methenyltetrahydrofolate + H2O = (6R)-10-formyltetrahydrofolate + H(+)</text>
        <dbReference type="Rhea" id="RHEA:23700"/>
        <dbReference type="ChEBI" id="CHEBI:15377"/>
        <dbReference type="ChEBI" id="CHEBI:15378"/>
        <dbReference type="ChEBI" id="CHEBI:57455"/>
        <dbReference type="ChEBI" id="CHEBI:195366"/>
        <dbReference type="EC" id="3.5.4.9"/>
    </reaction>
</comment>
<comment type="pathway">
    <text evidence="1">One-carbon metabolism; tetrahydrofolate interconversion.</text>
</comment>
<comment type="subunit">
    <text evidence="1 2">Homodimer (By similarity). Interacts with BrxC (PubMed:33722570).</text>
</comment>
<comment type="similarity">
    <text evidence="1">Belongs to the tetrahydrofolate dehydrogenase/cyclohydrolase family.</text>
</comment>
<name>FOLD_BACSU</name>
<feature type="chain" id="PRO_0000199299" description="Bifunctional protein FolD">
    <location>
        <begin position="1"/>
        <end position="283"/>
    </location>
</feature>
<feature type="binding site" evidence="1">
    <location>
        <begin position="165"/>
        <end position="167"/>
    </location>
    <ligand>
        <name>NADP(+)</name>
        <dbReference type="ChEBI" id="CHEBI:58349"/>
    </ligand>
</feature>
<feature type="binding site" evidence="1">
    <location>
        <position position="190"/>
    </location>
    <ligand>
        <name>NADP(+)</name>
        <dbReference type="ChEBI" id="CHEBI:58349"/>
    </ligand>
</feature>
<feature type="binding site" evidence="1">
    <location>
        <position position="231"/>
    </location>
    <ligand>
        <name>NADP(+)</name>
        <dbReference type="ChEBI" id="CHEBI:58349"/>
    </ligand>
</feature>
<proteinExistence type="evidence at protein level"/>
<sequence length="283" mass="30685">MTATIIDGKETAREKREQLAKEVEELKKQGVTPGLAVILIGDDPASHSYVRGKKKAAETMGMNFKLDQFDSSLTEAELLSIIDQYNQDPEFHGILVQLPLPDHISEKAVIERISPDKDVDGFHPLNVGKMLLGEDTFLPCTPHGIVELLKKTNIDLSGKEVVVVGRSNIVGKPVGQLLLNENATVTYCHSRTENITEHTKKADILVVAVGRANFISADQIKEGAVVIDVGVNRLENGKLCGDVEFEGAKEKASFITPVPGGVGPMTITMLAHNTVKSAKRTLS</sequence>
<gene>
    <name evidence="1" type="primary">folD</name>
    <name type="synonym">yqiA</name>
    <name type="ordered locus">BSU24310</name>
</gene>
<reference key="1">
    <citation type="journal article" date="1996" name="Microbiology">
        <title>Systematic sequencing of the 283 kb 210 degrees-232 degrees region of the Bacillus subtilis genome containing the skin element and many sporulation genes.</title>
        <authorList>
            <person name="Mizuno M."/>
            <person name="Masuda S."/>
            <person name="Takemaru K."/>
            <person name="Hosono S."/>
            <person name="Sato T."/>
            <person name="Takeuchi M."/>
            <person name="Kobayashi Y."/>
        </authorList>
    </citation>
    <scope>NUCLEOTIDE SEQUENCE [GENOMIC DNA]</scope>
    <source>
        <strain>168 / JH642</strain>
    </source>
</reference>
<reference key="2">
    <citation type="journal article" date="1997" name="Nature">
        <title>The complete genome sequence of the Gram-positive bacterium Bacillus subtilis.</title>
        <authorList>
            <person name="Kunst F."/>
            <person name="Ogasawara N."/>
            <person name="Moszer I."/>
            <person name="Albertini A.M."/>
            <person name="Alloni G."/>
            <person name="Azevedo V."/>
            <person name="Bertero M.G."/>
            <person name="Bessieres P."/>
            <person name="Bolotin A."/>
            <person name="Borchert S."/>
            <person name="Borriss R."/>
            <person name="Boursier L."/>
            <person name="Brans A."/>
            <person name="Braun M."/>
            <person name="Brignell S.C."/>
            <person name="Bron S."/>
            <person name="Brouillet S."/>
            <person name="Bruschi C.V."/>
            <person name="Caldwell B."/>
            <person name="Capuano V."/>
            <person name="Carter N.M."/>
            <person name="Choi S.-K."/>
            <person name="Codani J.-J."/>
            <person name="Connerton I.F."/>
            <person name="Cummings N.J."/>
            <person name="Daniel R.A."/>
            <person name="Denizot F."/>
            <person name="Devine K.M."/>
            <person name="Duesterhoeft A."/>
            <person name="Ehrlich S.D."/>
            <person name="Emmerson P.T."/>
            <person name="Entian K.-D."/>
            <person name="Errington J."/>
            <person name="Fabret C."/>
            <person name="Ferrari E."/>
            <person name="Foulger D."/>
            <person name="Fritz C."/>
            <person name="Fujita M."/>
            <person name="Fujita Y."/>
            <person name="Fuma S."/>
            <person name="Galizzi A."/>
            <person name="Galleron N."/>
            <person name="Ghim S.-Y."/>
            <person name="Glaser P."/>
            <person name="Goffeau A."/>
            <person name="Golightly E.J."/>
            <person name="Grandi G."/>
            <person name="Guiseppi G."/>
            <person name="Guy B.J."/>
            <person name="Haga K."/>
            <person name="Haiech J."/>
            <person name="Harwood C.R."/>
            <person name="Henaut A."/>
            <person name="Hilbert H."/>
            <person name="Holsappel S."/>
            <person name="Hosono S."/>
            <person name="Hullo M.-F."/>
            <person name="Itaya M."/>
            <person name="Jones L.-M."/>
            <person name="Joris B."/>
            <person name="Karamata D."/>
            <person name="Kasahara Y."/>
            <person name="Klaerr-Blanchard M."/>
            <person name="Klein C."/>
            <person name="Kobayashi Y."/>
            <person name="Koetter P."/>
            <person name="Koningstein G."/>
            <person name="Krogh S."/>
            <person name="Kumano M."/>
            <person name="Kurita K."/>
            <person name="Lapidus A."/>
            <person name="Lardinois S."/>
            <person name="Lauber J."/>
            <person name="Lazarevic V."/>
            <person name="Lee S.-M."/>
            <person name="Levine A."/>
            <person name="Liu H."/>
            <person name="Masuda S."/>
            <person name="Mauel C."/>
            <person name="Medigue C."/>
            <person name="Medina N."/>
            <person name="Mellado R.P."/>
            <person name="Mizuno M."/>
            <person name="Moestl D."/>
            <person name="Nakai S."/>
            <person name="Noback M."/>
            <person name="Noone D."/>
            <person name="O'Reilly M."/>
            <person name="Ogawa K."/>
            <person name="Ogiwara A."/>
            <person name="Oudega B."/>
            <person name="Park S.-H."/>
            <person name="Parro V."/>
            <person name="Pohl T.M."/>
            <person name="Portetelle D."/>
            <person name="Porwollik S."/>
            <person name="Prescott A.M."/>
            <person name="Presecan E."/>
            <person name="Pujic P."/>
            <person name="Purnelle B."/>
            <person name="Rapoport G."/>
            <person name="Rey M."/>
            <person name="Reynolds S."/>
            <person name="Rieger M."/>
            <person name="Rivolta C."/>
            <person name="Rocha E."/>
            <person name="Roche B."/>
            <person name="Rose M."/>
            <person name="Sadaie Y."/>
            <person name="Sato T."/>
            <person name="Scanlan E."/>
            <person name="Schleich S."/>
            <person name="Schroeter R."/>
            <person name="Scoffone F."/>
            <person name="Sekiguchi J."/>
            <person name="Sekowska A."/>
            <person name="Seror S.J."/>
            <person name="Serror P."/>
            <person name="Shin B.-S."/>
            <person name="Soldo B."/>
            <person name="Sorokin A."/>
            <person name="Tacconi E."/>
            <person name="Takagi T."/>
            <person name="Takahashi H."/>
            <person name="Takemaru K."/>
            <person name="Takeuchi M."/>
            <person name="Tamakoshi A."/>
            <person name="Tanaka T."/>
            <person name="Terpstra P."/>
            <person name="Tognoni A."/>
            <person name="Tosato V."/>
            <person name="Uchiyama S."/>
            <person name="Vandenbol M."/>
            <person name="Vannier F."/>
            <person name="Vassarotti A."/>
            <person name="Viari A."/>
            <person name="Wambutt R."/>
            <person name="Wedler E."/>
            <person name="Wedler H."/>
            <person name="Weitzenegger T."/>
            <person name="Winters P."/>
            <person name="Wipat A."/>
            <person name="Yamamoto H."/>
            <person name="Yamane K."/>
            <person name="Yasumoto K."/>
            <person name="Yata K."/>
            <person name="Yoshida K."/>
            <person name="Yoshikawa H.-F."/>
            <person name="Zumstein E."/>
            <person name="Yoshikawa H."/>
            <person name="Danchin A."/>
        </authorList>
    </citation>
    <scope>NUCLEOTIDE SEQUENCE [LARGE SCALE GENOMIC DNA]</scope>
    <source>
        <strain>168</strain>
    </source>
</reference>
<reference key="3">
    <citation type="journal article" date="2021" name="Redox Biol.">
        <title>The Bacillus subtilis monothiol bacilliredoxin BrxC (YtxJ) and the Bdr (YpdA) disulfide reductase reduce S-bacillithiolated proteins.</title>
        <authorList>
            <person name="Gaballa A."/>
            <person name="Su T.T."/>
            <person name="Helmann J.D."/>
        </authorList>
    </citation>
    <scope>INTERACTION WITH BRXC</scope>
    <scope>IDENTIFICATION BY MASS SPECTROMETRY</scope>
    <source>
        <strain evidence="3">168 / CU1065</strain>
    </source>
</reference>
<accession>P54382</accession>
<protein>
    <recommendedName>
        <fullName evidence="1">Bifunctional protein FolD</fullName>
    </recommendedName>
    <domain>
        <recommendedName>
            <fullName evidence="1">Methylenetetrahydrofolate dehydrogenase</fullName>
            <ecNumber evidence="1">1.5.1.5</ecNumber>
        </recommendedName>
    </domain>
    <domain>
        <recommendedName>
            <fullName evidence="1">Methenyltetrahydrofolate cyclohydrolase</fullName>
            <ecNumber evidence="1">3.5.4.9</ecNumber>
        </recommendedName>
    </domain>
</protein>
<evidence type="ECO:0000255" key="1">
    <source>
        <dbReference type="HAMAP-Rule" id="MF_01576"/>
    </source>
</evidence>
<evidence type="ECO:0000269" key="2">
    <source>
    </source>
</evidence>
<evidence type="ECO:0000303" key="3">
    <source>
    </source>
</evidence>
<keyword id="KW-0028">Amino-acid biosynthesis</keyword>
<keyword id="KW-0368">Histidine biosynthesis</keyword>
<keyword id="KW-0378">Hydrolase</keyword>
<keyword id="KW-0486">Methionine biosynthesis</keyword>
<keyword id="KW-0511">Multifunctional enzyme</keyword>
<keyword id="KW-0521">NADP</keyword>
<keyword id="KW-0554">One-carbon metabolism</keyword>
<keyword id="KW-0560">Oxidoreductase</keyword>
<keyword id="KW-0658">Purine biosynthesis</keyword>
<keyword id="KW-1185">Reference proteome</keyword>